<sequence length="206" mass="22310">MELNVKTLEGKDAGKVSLSDAIFGLEPREDIIARVIRWQLAKKRQGTHKAQGRAEVSRTGAKMYKQKGTGRARHHSARAPQFRGGGKAHGPVVRSHEHDLPKKVRALGLRLALSAKLKAEDVIILDNLVAADAKTKALAGAFETLGLTNALFIGGAELDSNFKLAAANIPNIDVLPVQGINVYDILRRGKLVLSKAAVEALEERFK</sequence>
<dbReference type="EMBL" id="CP000628">
    <property type="protein sequence ID" value="ACM26280.1"/>
    <property type="molecule type" value="Genomic_DNA"/>
</dbReference>
<dbReference type="RefSeq" id="WP_007690753.1">
    <property type="nucleotide sequence ID" value="NC_011985.1"/>
</dbReference>
<dbReference type="SMR" id="B9JDS9"/>
<dbReference type="STRING" id="311403.Arad_1973"/>
<dbReference type="GeneID" id="86848168"/>
<dbReference type="KEGG" id="ara:Arad_1973"/>
<dbReference type="eggNOG" id="COG0088">
    <property type="taxonomic scope" value="Bacteria"/>
</dbReference>
<dbReference type="HOGENOM" id="CLU_041575_5_1_5"/>
<dbReference type="Proteomes" id="UP000001600">
    <property type="component" value="Chromosome 1"/>
</dbReference>
<dbReference type="GO" id="GO:1990904">
    <property type="term" value="C:ribonucleoprotein complex"/>
    <property type="evidence" value="ECO:0007669"/>
    <property type="project" value="UniProtKB-KW"/>
</dbReference>
<dbReference type="GO" id="GO:0005840">
    <property type="term" value="C:ribosome"/>
    <property type="evidence" value="ECO:0007669"/>
    <property type="project" value="UniProtKB-KW"/>
</dbReference>
<dbReference type="GO" id="GO:0019843">
    <property type="term" value="F:rRNA binding"/>
    <property type="evidence" value="ECO:0007669"/>
    <property type="project" value="UniProtKB-UniRule"/>
</dbReference>
<dbReference type="GO" id="GO:0003735">
    <property type="term" value="F:structural constituent of ribosome"/>
    <property type="evidence" value="ECO:0007669"/>
    <property type="project" value="InterPro"/>
</dbReference>
<dbReference type="GO" id="GO:0006412">
    <property type="term" value="P:translation"/>
    <property type="evidence" value="ECO:0007669"/>
    <property type="project" value="UniProtKB-UniRule"/>
</dbReference>
<dbReference type="Gene3D" id="3.40.1370.10">
    <property type="match status" value="1"/>
</dbReference>
<dbReference type="HAMAP" id="MF_01328_B">
    <property type="entry name" value="Ribosomal_uL4_B"/>
    <property type="match status" value="1"/>
</dbReference>
<dbReference type="InterPro" id="IPR002136">
    <property type="entry name" value="Ribosomal_uL4"/>
</dbReference>
<dbReference type="InterPro" id="IPR013005">
    <property type="entry name" value="Ribosomal_uL4-like"/>
</dbReference>
<dbReference type="InterPro" id="IPR023574">
    <property type="entry name" value="Ribosomal_uL4_dom_sf"/>
</dbReference>
<dbReference type="NCBIfam" id="TIGR03953">
    <property type="entry name" value="rplD_bact"/>
    <property type="match status" value="1"/>
</dbReference>
<dbReference type="PANTHER" id="PTHR10746">
    <property type="entry name" value="50S RIBOSOMAL PROTEIN L4"/>
    <property type="match status" value="1"/>
</dbReference>
<dbReference type="PANTHER" id="PTHR10746:SF6">
    <property type="entry name" value="LARGE RIBOSOMAL SUBUNIT PROTEIN UL4M"/>
    <property type="match status" value="1"/>
</dbReference>
<dbReference type="Pfam" id="PF00573">
    <property type="entry name" value="Ribosomal_L4"/>
    <property type="match status" value="1"/>
</dbReference>
<dbReference type="SUPFAM" id="SSF52166">
    <property type="entry name" value="Ribosomal protein L4"/>
    <property type="match status" value="1"/>
</dbReference>
<keyword id="KW-0687">Ribonucleoprotein</keyword>
<keyword id="KW-0689">Ribosomal protein</keyword>
<keyword id="KW-0694">RNA-binding</keyword>
<keyword id="KW-0699">rRNA-binding</keyword>
<name>RL4_RHIR8</name>
<organism>
    <name type="scientific">Rhizobium rhizogenes (strain K84 / ATCC BAA-868)</name>
    <name type="common">Agrobacterium radiobacter</name>
    <dbReference type="NCBI Taxonomy" id="311403"/>
    <lineage>
        <taxon>Bacteria</taxon>
        <taxon>Pseudomonadati</taxon>
        <taxon>Pseudomonadota</taxon>
        <taxon>Alphaproteobacteria</taxon>
        <taxon>Hyphomicrobiales</taxon>
        <taxon>Rhizobiaceae</taxon>
        <taxon>Rhizobium/Agrobacterium group</taxon>
        <taxon>Rhizobium</taxon>
    </lineage>
</organism>
<evidence type="ECO:0000255" key="1">
    <source>
        <dbReference type="HAMAP-Rule" id="MF_01328"/>
    </source>
</evidence>
<evidence type="ECO:0000256" key="2">
    <source>
        <dbReference type="SAM" id="MobiDB-lite"/>
    </source>
</evidence>
<evidence type="ECO:0000305" key="3"/>
<protein>
    <recommendedName>
        <fullName evidence="1">Large ribosomal subunit protein uL4</fullName>
    </recommendedName>
    <alternativeName>
        <fullName evidence="3">50S ribosomal protein L4</fullName>
    </alternativeName>
</protein>
<proteinExistence type="inferred from homology"/>
<feature type="chain" id="PRO_1000165978" description="Large ribosomal subunit protein uL4">
    <location>
        <begin position="1"/>
        <end position="206"/>
    </location>
</feature>
<feature type="region of interest" description="Disordered" evidence="2">
    <location>
        <begin position="63"/>
        <end position="97"/>
    </location>
</feature>
<feature type="compositionally biased region" description="Basic residues" evidence="2">
    <location>
        <begin position="64"/>
        <end position="77"/>
    </location>
</feature>
<reference key="1">
    <citation type="journal article" date="2009" name="J. Bacteriol.">
        <title>Genome sequences of three Agrobacterium biovars help elucidate the evolution of multichromosome genomes in bacteria.</title>
        <authorList>
            <person name="Slater S.C."/>
            <person name="Goldman B.S."/>
            <person name="Goodner B."/>
            <person name="Setubal J.C."/>
            <person name="Farrand S.K."/>
            <person name="Nester E.W."/>
            <person name="Burr T.J."/>
            <person name="Banta L."/>
            <person name="Dickerman A.W."/>
            <person name="Paulsen I."/>
            <person name="Otten L."/>
            <person name="Suen G."/>
            <person name="Welch R."/>
            <person name="Almeida N.F."/>
            <person name="Arnold F."/>
            <person name="Burton O.T."/>
            <person name="Du Z."/>
            <person name="Ewing A."/>
            <person name="Godsy E."/>
            <person name="Heisel S."/>
            <person name="Houmiel K.L."/>
            <person name="Jhaveri J."/>
            <person name="Lu J."/>
            <person name="Miller N.M."/>
            <person name="Norton S."/>
            <person name="Chen Q."/>
            <person name="Phoolcharoen W."/>
            <person name="Ohlin V."/>
            <person name="Ondrusek D."/>
            <person name="Pride N."/>
            <person name="Stricklin S.L."/>
            <person name="Sun J."/>
            <person name="Wheeler C."/>
            <person name="Wilson L."/>
            <person name="Zhu H."/>
            <person name="Wood D.W."/>
        </authorList>
    </citation>
    <scope>NUCLEOTIDE SEQUENCE [LARGE SCALE GENOMIC DNA]</scope>
    <source>
        <strain>K84 / ATCC BAA-868</strain>
    </source>
</reference>
<accession>B9JDS9</accession>
<gene>
    <name evidence="1" type="primary">rplD</name>
    <name type="ordered locus">Arad_1973</name>
</gene>
<comment type="function">
    <text evidence="1">One of the primary rRNA binding proteins, this protein initially binds near the 5'-end of the 23S rRNA. It is important during the early stages of 50S assembly. It makes multiple contacts with different domains of the 23S rRNA in the assembled 50S subunit and ribosome.</text>
</comment>
<comment type="function">
    <text evidence="1">Forms part of the polypeptide exit tunnel.</text>
</comment>
<comment type="subunit">
    <text evidence="1">Part of the 50S ribosomal subunit.</text>
</comment>
<comment type="similarity">
    <text evidence="1">Belongs to the universal ribosomal protein uL4 family.</text>
</comment>